<organism>
    <name type="scientific">Hordeum vulgare</name>
    <name type="common">Barley</name>
    <dbReference type="NCBI Taxonomy" id="4513"/>
    <lineage>
        <taxon>Eukaryota</taxon>
        <taxon>Viridiplantae</taxon>
        <taxon>Streptophyta</taxon>
        <taxon>Embryophyta</taxon>
        <taxon>Tracheophyta</taxon>
        <taxon>Spermatophyta</taxon>
        <taxon>Magnoliopsida</taxon>
        <taxon>Liliopsida</taxon>
        <taxon>Poales</taxon>
        <taxon>Poaceae</taxon>
        <taxon>BOP clade</taxon>
        <taxon>Pooideae</taxon>
        <taxon>Triticodae</taxon>
        <taxon>Triticeae</taxon>
        <taxon>Hordeinae</taxon>
        <taxon>Hordeum</taxon>
    </lineage>
</organism>
<name>TBA2_HORVU</name>
<sequence>MRECISIHIGQAGIQVGNACWELYCLEHGIQPDGQMPGDKTVGGGDDAFNTFFSETGAGKHVPRAVFVDLEPTVIDEVRTGAYRQLFHPEQLISGKEDAANNFARGHYTIGKEIVDLCLDRIRKLSDNCTGLQGFLVFNAVGGGTGSGLGSLLLERLSVDYGKKSKLGFTVYPSPQVSTSVVEPYNSVLSTHSLLEHTDVSILLDNEAIYDICRRSLDIERPTYTNLNRLVSQVISSLTASLRFDGALNVDVNEFQTNLVPYPRIHFMLSSYAPVISAEKAYHEQLSVAEITNSAFEPSSMMAKCDPRHGKYMACCLMYRGDVVPKDVNAAVATIKTKRTIQFVDWCPTGFKCGINYQPPGVVPGGDLAKVQRAVCMISNSTSVVEVFSRIDHKFDLMYAKRAFVHWYVGEGMEEGEFSEAREDLAALEKDYEEVGAEFDDGEDGDEGDEY</sequence>
<evidence type="ECO:0000250" key="1"/>
<evidence type="ECO:0000250" key="2">
    <source>
        <dbReference type="UniProtKB" id="P68363"/>
    </source>
</evidence>
<evidence type="ECO:0000305" key="3"/>
<dbReference type="EC" id="3.6.5.-" evidence="2"/>
<dbReference type="EMBL" id="Y08490">
    <property type="protein sequence ID" value="CAA69724.1"/>
    <property type="molecule type" value="mRNA"/>
</dbReference>
<dbReference type="EMBL" id="U40042">
    <property type="protein sequence ID" value="AAB08791.1"/>
    <property type="molecule type" value="mRNA"/>
</dbReference>
<dbReference type="SMR" id="Q96460"/>
<dbReference type="OMA" id="FANAFCK"/>
<dbReference type="ExpressionAtlas" id="Q96460">
    <property type="expression patterns" value="baseline and differential"/>
</dbReference>
<dbReference type="GO" id="GO:0005737">
    <property type="term" value="C:cytoplasm"/>
    <property type="evidence" value="ECO:0007669"/>
    <property type="project" value="UniProtKB-KW"/>
</dbReference>
<dbReference type="GO" id="GO:0005874">
    <property type="term" value="C:microtubule"/>
    <property type="evidence" value="ECO:0007669"/>
    <property type="project" value="UniProtKB-KW"/>
</dbReference>
<dbReference type="GO" id="GO:0005525">
    <property type="term" value="F:GTP binding"/>
    <property type="evidence" value="ECO:0007669"/>
    <property type="project" value="UniProtKB-KW"/>
</dbReference>
<dbReference type="GO" id="GO:0016787">
    <property type="term" value="F:hydrolase activity"/>
    <property type="evidence" value="ECO:0007669"/>
    <property type="project" value="UniProtKB-KW"/>
</dbReference>
<dbReference type="GO" id="GO:0046872">
    <property type="term" value="F:metal ion binding"/>
    <property type="evidence" value="ECO:0007669"/>
    <property type="project" value="UniProtKB-KW"/>
</dbReference>
<dbReference type="GO" id="GO:0005200">
    <property type="term" value="F:structural constituent of cytoskeleton"/>
    <property type="evidence" value="ECO:0007669"/>
    <property type="project" value="InterPro"/>
</dbReference>
<dbReference type="GO" id="GO:0007017">
    <property type="term" value="P:microtubule-based process"/>
    <property type="evidence" value="ECO:0007669"/>
    <property type="project" value="InterPro"/>
</dbReference>
<dbReference type="CDD" id="cd02186">
    <property type="entry name" value="alpha_tubulin"/>
    <property type="match status" value="1"/>
</dbReference>
<dbReference type="FunFam" id="1.10.287.600:FF:000001">
    <property type="entry name" value="Tubulin alpha chain"/>
    <property type="match status" value="1"/>
</dbReference>
<dbReference type="FunFam" id="3.30.1330.20:FF:000001">
    <property type="entry name" value="Tubulin alpha chain"/>
    <property type="match status" value="1"/>
</dbReference>
<dbReference type="FunFam" id="3.40.50.1440:FF:000004">
    <property type="entry name" value="Tubulin alpha chain"/>
    <property type="match status" value="1"/>
</dbReference>
<dbReference type="Gene3D" id="1.10.287.600">
    <property type="entry name" value="Helix hairpin bin"/>
    <property type="match status" value="1"/>
</dbReference>
<dbReference type="Gene3D" id="3.30.1330.20">
    <property type="entry name" value="Tubulin/FtsZ, C-terminal domain"/>
    <property type="match status" value="1"/>
</dbReference>
<dbReference type="Gene3D" id="3.40.50.1440">
    <property type="entry name" value="Tubulin/FtsZ, GTPase domain"/>
    <property type="match status" value="1"/>
</dbReference>
<dbReference type="InterPro" id="IPR002452">
    <property type="entry name" value="Alpha_tubulin"/>
</dbReference>
<dbReference type="InterPro" id="IPR008280">
    <property type="entry name" value="Tub_FtsZ_C"/>
</dbReference>
<dbReference type="InterPro" id="IPR000217">
    <property type="entry name" value="Tubulin"/>
</dbReference>
<dbReference type="InterPro" id="IPR037103">
    <property type="entry name" value="Tubulin/FtsZ-like_C"/>
</dbReference>
<dbReference type="InterPro" id="IPR018316">
    <property type="entry name" value="Tubulin/FtsZ_2-layer-sand-dom"/>
</dbReference>
<dbReference type="InterPro" id="IPR036525">
    <property type="entry name" value="Tubulin/FtsZ_GTPase_sf"/>
</dbReference>
<dbReference type="InterPro" id="IPR023123">
    <property type="entry name" value="Tubulin_C"/>
</dbReference>
<dbReference type="InterPro" id="IPR017975">
    <property type="entry name" value="Tubulin_CS"/>
</dbReference>
<dbReference type="InterPro" id="IPR003008">
    <property type="entry name" value="Tubulin_FtsZ_GTPase"/>
</dbReference>
<dbReference type="PANTHER" id="PTHR11588">
    <property type="entry name" value="TUBULIN"/>
    <property type="match status" value="1"/>
</dbReference>
<dbReference type="Pfam" id="PF00091">
    <property type="entry name" value="Tubulin"/>
    <property type="match status" value="1"/>
</dbReference>
<dbReference type="Pfam" id="PF03953">
    <property type="entry name" value="Tubulin_C"/>
    <property type="match status" value="1"/>
</dbReference>
<dbReference type="PRINTS" id="PR01162">
    <property type="entry name" value="ALPHATUBULIN"/>
</dbReference>
<dbReference type="PRINTS" id="PR01161">
    <property type="entry name" value="TUBULIN"/>
</dbReference>
<dbReference type="SMART" id="SM00864">
    <property type="entry name" value="Tubulin"/>
    <property type="match status" value="1"/>
</dbReference>
<dbReference type="SMART" id="SM00865">
    <property type="entry name" value="Tubulin_C"/>
    <property type="match status" value="1"/>
</dbReference>
<dbReference type="SUPFAM" id="SSF55307">
    <property type="entry name" value="Tubulin C-terminal domain-like"/>
    <property type="match status" value="1"/>
</dbReference>
<dbReference type="SUPFAM" id="SSF52490">
    <property type="entry name" value="Tubulin nucleotide-binding domain-like"/>
    <property type="match status" value="1"/>
</dbReference>
<dbReference type="PROSITE" id="PS00227">
    <property type="entry name" value="TUBULIN"/>
    <property type="match status" value="1"/>
</dbReference>
<protein>
    <recommendedName>
        <fullName>Tubulin alpha-2 chain</fullName>
        <ecNumber evidence="2">3.6.5.-</ecNumber>
    </recommendedName>
</protein>
<reference key="1">
    <citation type="journal article" date="2001" name="Plant Mol. Biol.">
        <title>Alpha-tubulin genes are differentially expressed during leaf cell development in barley (Hordeum vulgare L.).</title>
        <authorList>
            <person name="Schroeder J."/>
            <person name="Stenger H."/>
            <person name="Wernicke W."/>
        </authorList>
    </citation>
    <scope>NUCLEOTIDE SEQUENCE [MRNA]</scope>
    <source>
        <strain>cv. Igri</strain>
        <tissue>Leaf</tissue>
    </source>
</reference>
<reference key="2">
    <citation type="submission" date="1995-11" db="EMBL/GenBank/DDBJ databases">
        <authorList>
            <person name="Close T.J."/>
            <person name="Choi D.W."/>
        </authorList>
    </citation>
    <scope>NUCLEOTIDE SEQUENCE [MRNA]</scope>
    <source>
        <strain>cv. Willis</strain>
    </source>
</reference>
<proteinExistence type="evidence at transcript level"/>
<accession>Q96460</accession>
<accession>Q96459</accession>
<feature type="chain" id="PRO_0000048183" description="Tubulin alpha-2 chain">
    <location>
        <begin position="1"/>
        <end position="451"/>
    </location>
</feature>
<feature type="active site" evidence="2">
    <location>
        <position position="254"/>
    </location>
</feature>
<feature type="binding site" evidence="2">
    <location>
        <position position="11"/>
    </location>
    <ligand>
        <name>GTP</name>
        <dbReference type="ChEBI" id="CHEBI:37565"/>
    </ligand>
</feature>
<feature type="binding site" evidence="2">
    <location>
        <position position="71"/>
    </location>
    <ligand>
        <name>GTP</name>
        <dbReference type="ChEBI" id="CHEBI:37565"/>
    </ligand>
</feature>
<feature type="binding site" evidence="2">
    <location>
        <position position="71"/>
    </location>
    <ligand>
        <name>Mg(2+)</name>
        <dbReference type="ChEBI" id="CHEBI:18420"/>
    </ligand>
</feature>
<feature type="binding site" evidence="2">
    <location>
        <position position="144"/>
    </location>
    <ligand>
        <name>GTP</name>
        <dbReference type="ChEBI" id="CHEBI:37565"/>
    </ligand>
</feature>
<feature type="binding site" evidence="2">
    <location>
        <position position="145"/>
    </location>
    <ligand>
        <name>GTP</name>
        <dbReference type="ChEBI" id="CHEBI:37565"/>
    </ligand>
</feature>
<feature type="binding site" evidence="2">
    <location>
        <position position="179"/>
    </location>
    <ligand>
        <name>GTP</name>
        <dbReference type="ChEBI" id="CHEBI:37565"/>
    </ligand>
</feature>
<feature type="binding site" evidence="2">
    <location>
        <position position="206"/>
    </location>
    <ligand>
        <name>GTP</name>
        <dbReference type="ChEBI" id="CHEBI:37565"/>
    </ligand>
</feature>
<feature type="binding site" evidence="2">
    <location>
        <position position="228"/>
    </location>
    <ligand>
        <name>GTP</name>
        <dbReference type="ChEBI" id="CHEBI:37565"/>
    </ligand>
</feature>
<feature type="site" description="Involved in polymerization" evidence="1">
    <location>
        <position position="451"/>
    </location>
</feature>
<feature type="modified residue" description="N6-acetyllysine" evidence="1">
    <location>
        <position position="40"/>
    </location>
</feature>
<feature type="sequence conflict" description="In Ref. 2; AAB08791." evidence="3" ref="2">
    <original>FTVY</original>
    <variation>VHSV</variation>
    <location>
        <begin position="169"/>
        <end position="172"/>
    </location>
</feature>
<comment type="function">
    <text>Tubulin is the major constituent of microtubules, a cylinder consisting of laterally associated linear protofilaments composed of alpha- and beta-tubulin heterodimers. Microtubules grow by the addition of GTP-tubulin dimers to the microtubule end, where a stabilizing cap forms. Below the cap, tubulin dimers are in GDP-bound state, owing to GTPase activity of alpha-tubulin.</text>
</comment>
<comment type="catalytic activity">
    <reaction evidence="2">
        <text>GTP + H2O = GDP + phosphate + H(+)</text>
        <dbReference type="Rhea" id="RHEA:19669"/>
        <dbReference type="ChEBI" id="CHEBI:15377"/>
        <dbReference type="ChEBI" id="CHEBI:15378"/>
        <dbReference type="ChEBI" id="CHEBI:37565"/>
        <dbReference type="ChEBI" id="CHEBI:43474"/>
        <dbReference type="ChEBI" id="CHEBI:58189"/>
    </reaction>
    <physiologicalReaction direction="left-to-right" evidence="2">
        <dbReference type="Rhea" id="RHEA:19670"/>
    </physiologicalReaction>
</comment>
<comment type="cofactor">
    <cofactor evidence="2">
        <name>Mg(2+)</name>
        <dbReference type="ChEBI" id="CHEBI:18420"/>
    </cofactor>
</comment>
<comment type="subunit">
    <text>Dimer of alpha and beta chains. A typical microtubule is a hollow water-filled tube with an outer diameter of 25 nm and an inner diameter of 15 nM. Alpha-beta heterodimers associate head-to-tail to form protofilaments running lengthwise along the microtubule wall with the beta-tubulin subunit facing the microtubule plus end conferring a structural polarity. Microtubules usually have 13 protofilaments but different protofilament numbers can be found in some organisms and specialized cells.</text>
</comment>
<comment type="subcellular location">
    <subcellularLocation>
        <location>Cytoplasm</location>
        <location>Cytoskeleton</location>
    </subcellularLocation>
</comment>
<comment type="PTM">
    <text evidence="1">Undergoes a tyrosination/detyrosination cycle, the cyclic removal and re-addition of a C-terminal tyrosine residue by the enzymes tubulin tyrosine carboxypeptidase (TTCP) and tubulin tyrosine ligase (TTL), respectively.</text>
</comment>
<comment type="PTM">
    <text evidence="1">Acetylation of alpha chains at Lys-40 stabilizes microtubules and affects affinity and processivity of microtubule motors. This modification has a role in multiple cellular functions, ranging from cell motility, cell cycle progression or cell differentiation to intracellular trafficking and signaling (By similarity).</text>
</comment>
<comment type="similarity">
    <text evidence="3">Belongs to the tubulin family.</text>
</comment>
<gene>
    <name type="primary">TUBA2</name>
    <name type="synonym">ATUB2</name>
</gene>
<keyword id="KW-0007">Acetylation</keyword>
<keyword id="KW-0963">Cytoplasm</keyword>
<keyword id="KW-0206">Cytoskeleton</keyword>
<keyword id="KW-0342">GTP-binding</keyword>
<keyword id="KW-0378">Hydrolase</keyword>
<keyword id="KW-0460">Magnesium</keyword>
<keyword id="KW-0479">Metal-binding</keyword>
<keyword id="KW-0493">Microtubule</keyword>
<keyword id="KW-0547">Nucleotide-binding</keyword>